<accession>P02025</accession>
<keyword id="KW-0007">Acetylation</keyword>
<keyword id="KW-0903">Direct protein sequencing</keyword>
<keyword id="KW-0349">Heme</keyword>
<keyword id="KW-0408">Iron</keyword>
<keyword id="KW-0479">Metal-binding</keyword>
<keyword id="KW-0561">Oxygen transport</keyword>
<keyword id="KW-0597">Phosphoprotein</keyword>
<keyword id="KW-0702">S-nitrosylation</keyword>
<keyword id="KW-0813">Transport</keyword>
<reference key="1">
    <citation type="journal article" date="1971" name="Biochem. Genet.">
        <title>Primate hemoglobins: some sequences and some proposals concerning the character of evolution and mutation.</title>
        <authorList>
            <person name="Boyer S.H."/>
            <person name="Crosby E.F."/>
            <person name="Noyes A.N."/>
            <person name="Fuller G.F."/>
            <person name="Leslie S.E."/>
            <person name="Donaldson L.J."/>
            <person name="Vrablik G.R."/>
            <person name="Schaefer E.W. Jr."/>
            <person name="Thurmon T.F."/>
        </authorList>
    </citation>
    <scope>PROTEIN SEQUENCE</scope>
</reference>
<proteinExistence type="evidence at protein level"/>
<gene>
    <name type="primary">HBB</name>
</gene>
<name>HBB_HYLLA</name>
<organism>
    <name type="scientific">Hylobates lar</name>
    <name type="common">Lar gibbon</name>
    <name type="synonym">White-handed gibbon</name>
    <dbReference type="NCBI Taxonomy" id="9580"/>
    <lineage>
        <taxon>Eukaryota</taxon>
        <taxon>Metazoa</taxon>
        <taxon>Chordata</taxon>
        <taxon>Craniata</taxon>
        <taxon>Vertebrata</taxon>
        <taxon>Euteleostomi</taxon>
        <taxon>Mammalia</taxon>
        <taxon>Eutheria</taxon>
        <taxon>Euarchontoglires</taxon>
        <taxon>Primates</taxon>
        <taxon>Haplorrhini</taxon>
        <taxon>Catarrhini</taxon>
        <taxon>Hylobatidae</taxon>
        <taxon>Hylobates</taxon>
    </lineage>
</organism>
<dbReference type="PIR" id="A02353">
    <property type="entry name" value="HBGI"/>
</dbReference>
<dbReference type="BMRB" id="P02025"/>
<dbReference type="SMR" id="P02025"/>
<dbReference type="GO" id="GO:0072562">
    <property type="term" value="C:blood microparticle"/>
    <property type="evidence" value="ECO:0007669"/>
    <property type="project" value="TreeGrafter"/>
</dbReference>
<dbReference type="GO" id="GO:0031838">
    <property type="term" value="C:haptoglobin-hemoglobin complex"/>
    <property type="evidence" value="ECO:0007669"/>
    <property type="project" value="TreeGrafter"/>
</dbReference>
<dbReference type="GO" id="GO:0005833">
    <property type="term" value="C:hemoglobin complex"/>
    <property type="evidence" value="ECO:0007669"/>
    <property type="project" value="InterPro"/>
</dbReference>
<dbReference type="GO" id="GO:0031720">
    <property type="term" value="F:haptoglobin binding"/>
    <property type="evidence" value="ECO:0007669"/>
    <property type="project" value="TreeGrafter"/>
</dbReference>
<dbReference type="GO" id="GO:0020037">
    <property type="term" value="F:heme binding"/>
    <property type="evidence" value="ECO:0007669"/>
    <property type="project" value="InterPro"/>
</dbReference>
<dbReference type="GO" id="GO:0031721">
    <property type="term" value="F:hemoglobin alpha binding"/>
    <property type="evidence" value="ECO:0007669"/>
    <property type="project" value="TreeGrafter"/>
</dbReference>
<dbReference type="GO" id="GO:0046872">
    <property type="term" value="F:metal ion binding"/>
    <property type="evidence" value="ECO:0007669"/>
    <property type="project" value="UniProtKB-KW"/>
</dbReference>
<dbReference type="GO" id="GO:0043177">
    <property type="term" value="F:organic acid binding"/>
    <property type="evidence" value="ECO:0007669"/>
    <property type="project" value="TreeGrafter"/>
</dbReference>
<dbReference type="GO" id="GO:0019825">
    <property type="term" value="F:oxygen binding"/>
    <property type="evidence" value="ECO:0007669"/>
    <property type="project" value="InterPro"/>
</dbReference>
<dbReference type="GO" id="GO:0005344">
    <property type="term" value="F:oxygen carrier activity"/>
    <property type="evidence" value="ECO:0007669"/>
    <property type="project" value="UniProtKB-KW"/>
</dbReference>
<dbReference type="GO" id="GO:0004601">
    <property type="term" value="F:peroxidase activity"/>
    <property type="evidence" value="ECO:0007669"/>
    <property type="project" value="TreeGrafter"/>
</dbReference>
<dbReference type="GO" id="GO:0042744">
    <property type="term" value="P:hydrogen peroxide catabolic process"/>
    <property type="evidence" value="ECO:0007669"/>
    <property type="project" value="TreeGrafter"/>
</dbReference>
<dbReference type="CDD" id="cd08925">
    <property type="entry name" value="Hb-beta-like"/>
    <property type="match status" value="1"/>
</dbReference>
<dbReference type="FunFam" id="1.10.490.10:FF:000001">
    <property type="entry name" value="Hemoglobin subunit beta"/>
    <property type="match status" value="1"/>
</dbReference>
<dbReference type="Gene3D" id="1.10.490.10">
    <property type="entry name" value="Globins"/>
    <property type="match status" value="1"/>
</dbReference>
<dbReference type="InterPro" id="IPR000971">
    <property type="entry name" value="Globin"/>
</dbReference>
<dbReference type="InterPro" id="IPR009050">
    <property type="entry name" value="Globin-like_sf"/>
</dbReference>
<dbReference type="InterPro" id="IPR012292">
    <property type="entry name" value="Globin/Proto"/>
</dbReference>
<dbReference type="InterPro" id="IPR002337">
    <property type="entry name" value="Hemoglobin_b"/>
</dbReference>
<dbReference type="InterPro" id="IPR050056">
    <property type="entry name" value="Hemoglobin_oxygen_transport"/>
</dbReference>
<dbReference type="PANTHER" id="PTHR11442">
    <property type="entry name" value="HEMOGLOBIN FAMILY MEMBER"/>
    <property type="match status" value="1"/>
</dbReference>
<dbReference type="PANTHER" id="PTHR11442:SF42">
    <property type="entry name" value="HEMOGLOBIN SUBUNIT BETA"/>
    <property type="match status" value="1"/>
</dbReference>
<dbReference type="Pfam" id="PF00042">
    <property type="entry name" value="Globin"/>
    <property type="match status" value="1"/>
</dbReference>
<dbReference type="PRINTS" id="PR00814">
    <property type="entry name" value="BETAHAEM"/>
</dbReference>
<dbReference type="SUPFAM" id="SSF46458">
    <property type="entry name" value="Globin-like"/>
    <property type="match status" value="1"/>
</dbReference>
<dbReference type="PROSITE" id="PS01033">
    <property type="entry name" value="GLOBIN"/>
    <property type="match status" value="1"/>
</dbReference>
<comment type="function">
    <text>Involved in oxygen transport from the lung to the various peripheral tissues.</text>
</comment>
<comment type="subunit">
    <text>Heterotetramer of two alpha chains and two beta chains.</text>
</comment>
<comment type="tissue specificity">
    <text>Red blood cells.</text>
</comment>
<comment type="similarity">
    <text evidence="3">Belongs to the globin family.</text>
</comment>
<feature type="chain" id="PRO_0000052977" description="Hemoglobin subunit beta">
    <location>
        <begin position="1"/>
        <end position="146"/>
    </location>
</feature>
<feature type="domain" description="Globin" evidence="3">
    <location>
        <begin position="2"/>
        <end position="146"/>
    </location>
</feature>
<feature type="binding site" description="distal binding residue">
    <location>
        <position position="63"/>
    </location>
    <ligand>
        <name>heme b</name>
        <dbReference type="ChEBI" id="CHEBI:60344"/>
    </ligand>
    <ligandPart>
        <name>Fe</name>
        <dbReference type="ChEBI" id="CHEBI:18248"/>
    </ligandPart>
</feature>
<feature type="binding site" description="proximal binding residue">
    <location>
        <position position="92"/>
    </location>
    <ligand>
        <name>heme b</name>
        <dbReference type="ChEBI" id="CHEBI:60344"/>
    </ligand>
    <ligandPart>
        <name>Fe</name>
        <dbReference type="ChEBI" id="CHEBI:18248"/>
    </ligandPart>
</feature>
<feature type="modified residue" description="N-acetylvaline" evidence="1">
    <location>
        <position position="1"/>
    </location>
</feature>
<feature type="modified residue" description="Phosphothreonine" evidence="2">
    <location>
        <position position="12"/>
    </location>
</feature>
<feature type="modified residue" description="Phosphoserine" evidence="2">
    <location>
        <position position="44"/>
    </location>
</feature>
<feature type="modified residue" description="N6-acetyllysine" evidence="2">
    <location>
        <position position="59"/>
    </location>
</feature>
<feature type="modified residue" description="N6-acetyllysine" evidence="2">
    <location>
        <position position="82"/>
    </location>
</feature>
<feature type="modified residue" description="S-nitrosocysteine" evidence="2">
    <location>
        <position position="93"/>
    </location>
</feature>
<feature type="modified residue" description="N6-acetyllysine" evidence="2">
    <location>
        <position position="144"/>
    </location>
</feature>
<feature type="sequence variant" description="In common allele.">
    <original>N</original>
    <variation>D</variation>
    <location>
        <position position="80"/>
    </location>
</feature>
<feature type="sequence variant" description="In common and uncommon allele.">
    <original>Q</original>
    <variation>K</variation>
    <location>
        <position position="87"/>
    </location>
</feature>
<evidence type="ECO:0000250" key="1">
    <source>
        <dbReference type="UniProtKB" id="P02086"/>
    </source>
</evidence>
<evidence type="ECO:0000250" key="2">
    <source>
        <dbReference type="UniProtKB" id="P68871"/>
    </source>
</evidence>
<evidence type="ECO:0000255" key="3">
    <source>
        <dbReference type="PROSITE-ProRule" id="PRU00238"/>
    </source>
</evidence>
<protein>
    <recommendedName>
        <fullName>Hemoglobin subunit beta</fullName>
    </recommendedName>
    <alternativeName>
        <fullName>Beta-globin</fullName>
    </alternativeName>
    <alternativeName>
        <fullName>Hemoglobin beta chain</fullName>
    </alternativeName>
</protein>
<sequence>VHLTPEEKSAVTALWGKVNVDEVGGEALGRLLVVYPWTQRFFESFGDLSTPDAVMGNPKVKAHGKKVLGAFSDGLAHLDNLKGTFAQLSELHCDKLHVDPENFRLLGNVLVCVLAHHFGKEFTPQVQAAYQKVVAGVANALAHKYH</sequence>